<accession>Q6BZZ6</accession>
<dbReference type="EMBL" id="CR382132">
    <property type="protein sequence ID" value="CAG78829.1"/>
    <property type="molecule type" value="Genomic_DNA"/>
</dbReference>
<dbReference type="RefSeq" id="XP_506016.1">
    <property type="nucleotide sequence ID" value="XM_506016.1"/>
</dbReference>
<dbReference type="FunCoup" id="Q6BZZ6">
    <property type="interactions" value="143"/>
</dbReference>
<dbReference type="EnsemblFungi" id="CAG78829">
    <property type="protein sequence ID" value="CAG78829"/>
    <property type="gene ID" value="YALI0_F29491g"/>
</dbReference>
<dbReference type="KEGG" id="yli:2908731"/>
<dbReference type="VEuPathDB" id="FungiDB:YALI0_F29491g"/>
<dbReference type="HOGENOM" id="CLU_014926_1_0_1"/>
<dbReference type="InParanoid" id="Q6BZZ6"/>
<dbReference type="OMA" id="WNGYNRM"/>
<dbReference type="OrthoDB" id="90588at4891"/>
<dbReference type="Proteomes" id="UP000001300">
    <property type="component" value="Chromosome F"/>
</dbReference>
<dbReference type="GO" id="GO:0005737">
    <property type="term" value="C:cytoplasm"/>
    <property type="evidence" value="ECO:0007669"/>
    <property type="project" value="UniProtKB-SubCell"/>
</dbReference>
<dbReference type="GO" id="GO:0005634">
    <property type="term" value="C:nucleus"/>
    <property type="evidence" value="ECO:0007669"/>
    <property type="project" value="UniProtKB-SubCell"/>
</dbReference>
<dbReference type="InterPro" id="IPR019412">
    <property type="entry name" value="Iml2/TPR_39"/>
</dbReference>
<dbReference type="PANTHER" id="PTHR31859">
    <property type="entry name" value="TETRATRICOPEPTIDE REPEAT PROTEIN 39 FAMILY MEMBER"/>
    <property type="match status" value="1"/>
</dbReference>
<dbReference type="PANTHER" id="PTHR31859:SF1">
    <property type="entry name" value="TETRATRICOPEPTIDE REPEAT PROTEIN 39C"/>
    <property type="match status" value="1"/>
</dbReference>
<dbReference type="Pfam" id="PF10300">
    <property type="entry name" value="Iml2-TPR_39"/>
    <property type="match status" value="1"/>
</dbReference>
<proteinExistence type="inferred from homology"/>
<reference key="1">
    <citation type="journal article" date="2004" name="Nature">
        <title>Genome evolution in yeasts.</title>
        <authorList>
            <person name="Dujon B."/>
            <person name="Sherman D."/>
            <person name="Fischer G."/>
            <person name="Durrens P."/>
            <person name="Casaregola S."/>
            <person name="Lafontaine I."/>
            <person name="de Montigny J."/>
            <person name="Marck C."/>
            <person name="Neuveglise C."/>
            <person name="Talla E."/>
            <person name="Goffard N."/>
            <person name="Frangeul L."/>
            <person name="Aigle M."/>
            <person name="Anthouard V."/>
            <person name="Babour A."/>
            <person name="Barbe V."/>
            <person name="Barnay S."/>
            <person name="Blanchin S."/>
            <person name="Beckerich J.-M."/>
            <person name="Beyne E."/>
            <person name="Bleykasten C."/>
            <person name="Boisrame A."/>
            <person name="Boyer J."/>
            <person name="Cattolico L."/>
            <person name="Confanioleri F."/>
            <person name="de Daruvar A."/>
            <person name="Despons L."/>
            <person name="Fabre E."/>
            <person name="Fairhead C."/>
            <person name="Ferry-Dumazet H."/>
            <person name="Groppi A."/>
            <person name="Hantraye F."/>
            <person name="Hennequin C."/>
            <person name="Jauniaux N."/>
            <person name="Joyet P."/>
            <person name="Kachouri R."/>
            <person name="Kerrest A."/>
            <person name="Koszul R."/>
            <person name="Lemaire M."/>
            <person name="Lesur I."/>
            <person name="Ma L."/>
            <person name="Muller H."/>
            <person name="Nicaud J.-M."/>
            <person name="Nikolski M."/>
            <person name="Oztas S."/>
            <person name="Ozier-Kalogeropoulos O."/>
            <person name="Pellenz S."/>
            <person name="Potier S."/>
            <person name="Richard G.-F."/>
            <person name="Straub M.-L."/>
            <person name="Suleau A."/>
            <person name="Swennen D."/>
            <person name="Tekaia F."/>
            <person name="Wesolowski-Louvel M."/>
            <person name="Westhof E."/>
            <person name="Wirth B."/>
            <person name="Zeniou-Meyer M."/>
            <person name="Zivanovic Y."/>
            <person name="Bolotin-Fukuhara M."/>
            <person name="Thierry A."/>
            <person name="Bouchier C."/>
            <person name="Caudron B."/>
            <person name="Scarpelli C."/>
            <person name="Gaillardin C."/>
            <person name="Weissenbach J."/>
            <person name="Wincker P."/>
            <person name="Souciet J.-L."/>
        </authorList>
    </citation>
    <scope>NUCLEOTIDE SEQUENCE [LARGE SCALE GENOMIC DNA]</scope>
    <source>
        <strain>CLIB 122 / E 150</strain>
    </source>
</reference>
<feature type="chain" id="PRO_0000333359" description="Inclusion body clearance protein IML2">
    <location>
        <begin position="1"/>
        <end position="721"/>
    </location>
</feature>
<organism>
    <name type="scientific">Yarrowia lipolytica (strain CLIB 122 / E 150)</name>
    <name type="common">Yeast</name>
    <name type="synonym">Candida lipolytica</name>
    <dbReference type="NCBI Taxonomy" id="284591"/>
    <lineage>
        <taxon>Eukaryota</taxon>
        <taxon>Fungi</taxon>
        <taxon>Dikarya</taxon>
        <taxon>Ascomycota</taxon>
        <taxon>Saccharomycotina</taxon>
        <taxon>Dipodascomycetes</taxon>
        <taxon>Dipodascales</taxon>
        <taxon>Dipodascales incertae sedis</taxon>
        <taxon>Yarrowia</taxon>
    </lineage>
</organism>
<protein>
    <recommendedName>
        <fullName>Inclusion body clearance protein IML2</fullName>
    </recommendedName>
</protein>
<keyword id="KW-0963">Cytoplasm</keyword>
<keyword id="KW-0539">Nucleus</keyword>
<keyword id="KW-0597">Phosphoprotein</keyword>
<keyword id="KW-1185">Reference proteome</keyword>
<sequence length="721" mass="80282">MLKALGLGKRGGDMPTKPLNNSTVSLAIMDDALRVEEAFIAMDMVMDDRSKEALKLIQKDEPGSSGKSVAREQSAFYKLVIGVIYFIEATLGFEPESIRRASEALAEAEAAAVRQKRNVSNNGAHVSYSKYPPGTEYRVAFAEAELMGAITLFLSESYLESVKALYKLRKAYQTLDEISKSIRESKKPAKSSDHKSTLDSLSLAVSDDQEMASLVEKFQKTRLNRLNESNNATPVASSAASMNTTTSSATALHQGSETIEEFIESGVDLCFGILQLVISIIPPTLGKILSVVGFRGSRDGGLSLLWEATNYRNIHGALALLVLLQFYDGPTQFSDLILPGTEEDLIQQGKYDINTADDTEITLTATITGGSGHSKKVHTLPKNPRRRMHKLLLAARGYYPHSALWMLQQGRMEASQCHLEKAVDIMDADIGPIEMKQVEALMLFDKTMFMLFLNRYEQSATNFIRLIDINAWSHAWYTYVAATCSIEIYRENLRAGNAEAAKKAKDTATRLLTEAPGLIGKKKLMAKTMPMDVFLSRKISQMQQLSKQHNIDLVDAAGVSPVQEVVYFWNGYGKMPEYALEKVFSEVLAYSAAPLAPSHIPEQDNEKTVRHLLQAVALRNMGKVEEGYKILNDNVISQIITESNNKYHYNKTVTHKDPWMPPSALYERAMFEWVMHGPKGTETVREWLHLAEKWSDDYELSTRVGMKIKSAFERLDGGALA</sequence>
<gene>
    <name type="primary">IML2</name>
    <name type="ordered locus">YALI0F29491g</name>
</gene>
<name>IML2_YARLI</name>
<evidence type="ECO:0000250" key="1">
    <source>
        <dbReference type="UniProtKB" id="P47031"/>
    </source>
</evidence>
<evidence type="ECO:0000305" key="2"/>
<comment type="function">
    <text evidence="1">Inclusion body (IB) resident protein that interacts strongly with lipid droplet (LD) proteins. Involved in LD-mediated IB clearing after protein folding stress, probably by enabling access to the IBs of an LD-stored soluble sterol derivative that acts as a chaperone in inclusion clearing.</text>
</comment>
<comment type="subunit">
    <text evidence="1">Interacts with lipid droplet proteins.</text>
</comment>
<comment type="subcellular location">
    <subcellularLocation>
        <location evidence="1">Cytoplasm</location>
    </subcellularLocation>
    <subcellularLocation>
        <location evidence="1">Nucleus</location>
    </subcellularLocation>
    <text evidence="1">Localized exclusively in cytoplasmic inclusion bodies under protein folding stress conditions.</text>
</comment>
<comment type="similarity">
    <text evidence="2">Belongs to the IML2 family.</text>
</comment>